<evidence type="ECO:0000255" key="1">
    <source>
        <dbReference type="HAMAP-Rule" id="MF_00168"/>
    </source>
</evidence>
<gene>
    <name evidence="1" type="primary">tgt</name>
    <name type="ordered locus">MW1589</name>
</gene>
<sequence length="379" mass="43310">MPAVTYEHIKTCKQSGARLGIVHTPHGSFETPMFMPVGTKATVKTMSPEELRQIEAKIILGNTYHLWLQPGNDIIKHAGGLHKFMNWDGPILTDSGGFQVFSLSNLRKITEEGVEFRHHTNGSKLFLSPEKSMQIQNDLGSDIMMAFDECPPMPAEYDYVKKSIERTTRWAKRCLDAHQRPEDQALFGIIQGGEYEDLREQSAKDLVELDFPGYAIGGLSVGEPKPVMYKMVEHTEQFMPKDKPRYLMGVGSPDALIECSIRGMDMFDCVLPTRIARNGTCMTSQGRLVIKNAKFADDLRPLDENCDCYTCQNYSRAYIRHLIKAEETFGIRLTTIHNLHFLLKLMEDIRQAIREDRLLDFKEEFFEQYGLNVENPKNF</sequence>
<reference key="1">
    <citation type="journal article" date="2002" name="Lancet">
        <title>Genome and virulence determinants of high virulence community-acquired MRSA.</title>
        <authorList>
            <person name="Baba T."/>
            <person name="Takeuchi F."/>
            <person name="Kuroda M."/>
            <person name="Yuzawa H."/>
            <person name="Aoki K."/>
            <person name="Oguchi A."/>
            <person name="Nagai Y."/>
            <person name="Iwama N."/>
            <person name="Asano K."/>
            <person name="Naimi T."/>
            <person name="Kuroda H."/>
            <person name="Cui L."/>
            <person name="Yamamoto K."/>
            <person name="Hiramatsu K."/>
        </authorList>
    </citation>
    <scope>NUCLEOTIDE SEQUENCE [LARGE SCALE GENOMIC DNA]</scope>
    <source>
        <strain>MW2</strain>
    </source>
</reference>
<dbReference type="EC" id="2.4.2.29" evidence="1"/>
<dbReference type="EMBL" id="BA000033">
    <property type="protein sequence ID" value="BAB95454.1"/>
    <property type="molecule type" value="Genomic_DNA"/>
</dbReference>
<dbReference type="RefSeq" id="WP_001112045.1">
    <property type="nucleotide sequence ID" value="NC_003923.1"/>
</dbReference>
<dbReference type="SMR" id="P66906"/>
<dbReference type="KEGG" id="sam:MW1589"/>
<dbReference type="HOGENOM" id="CLU_022060_0_1_9"/>
<dbReference type="UniPathway" id="UPA00392"/>
<dbReference type="GO" id="GO:0005829">
    <property type="term" value="C:cytosol"/>
    <property type="evidence" value="ECO:0007669"/>
    <property type="project" value="TreeGrafter"/>
</dbReference>
<dbReference type="GO" id="GO:0046872">
    <property type="term" value="F:metal ion binding"/>
    <property type="evidence" value="ECO:0007669"/>
    <property type="project" value="UniProtKB-KW"/>
</dbReference>
<dbReference type="GO" id="GO:0008479">
    <property type="term" value="F:tRNA-guanosine(34) queuine transglycosylase activity"/>
    <property type="evidence" value="ECO:0007669"/>
    <property type="project" value="UniProtKB-UniRule"/>
</dbReference>
<dbReference type="GO" id="GO:0008616">
    <property type="term" value="P:queuosine biosynthetic process"/>
    <property type="evidence" value="ECO:0007669"/>
    <property type="project" value="UniProtKB-UniRule"/>
</dbReference>
<dbReference type="GO" id="GO:0002099">
    <property type="term" value="P:tRNA wobble guanine modification"/>
    <property type="evidence" value="ECO:0007669"/>
    <property type="project" value="TreeGrafter"/>
</dbReference>
<dbReference type="GO" id="GO:0101030">
    <property type="term" value="P:tRNA-guanine transglycosylation"/>
    <property type="evidence" value="ECO:0007669"/>
    <property type="project" value="InterPro"/>
</dbReference>
<dbReference type="FunFam" id="3.20.20.105:FF:000001">
    <property type="entry name" value="Queuine tRNA-ribosyltransferase"/>
    <property type="match status" value="1"/>
</dbReference>
<dbReference type="Gene3D" id="3.20.20.105">
    <property type="entry name" value="Queuine tRNA-ribosyltransferase-like"/>
    <property type="match status" value="1"/>
</dbReference>
<dbReference type="HAMAP" id="MF_00168">
    <property type="entry name" value="Q_tRNA_Tgt"/>
    <property type="match status" value="1"/>
</dbReference>
<dbReference type="InterPro" id="IPR050076">
    <property type="entry name" value="ArchSynthase1/Queuine_TRR"/>
</dbReference>
<dbReference type="InterPro" id="IPR004803">
    <property type="entry name" value="TGT"/>
</dbReference>
<dbReference type="InterPro" id="IPR036511">
    <property type="entry name" value="TGT-like_sf"/>
</dbReference>
<dbReference type="InterPro" id="IPR002616">
    <property type="entry name" value="tRNA_ribo_trans-like"/>
</dbReference>
<dbReference type="NCBIfam" id="TIGR00430">
    <property type="entry name" value="Q_tRNA_tgt"/>
    <property type="match status" value="1"/>
</dbReference>
<dbReference type="NCBIfam" id="TIGR00449">
    <property type="entry name" value="tgt_general"/>
    <property type="match status" value="1"/>
</dbReference>
<dbReference type="PANTHER" id="PTHR46499">
    <property type="entry name" value="QUEUINE TRNA-RIBOSYLTRANSFERASE"/>
    <property type="match status" value="1"/>
</dbReference>
<dbReference type="PANTHER" id="PTHR46499:SF1">
    <property type="entry name" value="QUEUINE TRNA-RIBOSYLTRANSFERASE"/>
    <property type="match status" value="1"/>
</dbReference>
<dbReference type="Pfam" id="PF01702">
    <property type="entry name" value="TGT"/>
    <property type="match status" value="1"/>
</dbReference>
<dbReference type="SUPFAM" id="SSF51713">
    <property type="entry name" value="tRNA-guanine transglycosylase"/>
    <property type="match status" value="1"/>
</dbReference>
<comment type="function">
    <text evidence="1">Catalyzes the base-exchange of a guanine (G) residue with the queuine precursor 7-aminomethyl-7-deazaguanine (PreQ1) at position 34 (anticodon wobble position) in tRNAs with GU(N) anticodons (tRNA-Asp, -Asn, -His and -Tyr). Catalysis occurs through a double-displacement mechanism. The nucleophile active site attacks the C1' of nucleotide 34 to detach the guanine base from the RNA, forming a covalent enzyme-RNA intermediate. The proton acceptor active site deprotonates the incoming PreQ1, allowing a nucleophilic attack on the C1' of the ribose to form the product. After dissociation, two additional enzymatic reactions on the tRNA convert PreQ1 to queuine (Q), resulting in the hypermodified nucleoside queuosine (7-(((4,5-cis-dihydroxy-2-cyclopenten-1-yl)amino)methyl)-7-deazaguanosine).</text>
</comment>
<comment type="catalytic activity">
    <reaction evidence="1">
        <text>7-aminomethyl-7-carbaguanine + guanosine(34) in tRNA = 7-aminomethyl-7-carbaguanosine(34) in tRNA + guanine</text>
        <dbReference type="Rhea" id="RHEA:24104"/>
        <dbReference type="Rhea" id="RHEA-COMP:10341"/>
        <dbReference type="Rhea" id="RHEA-COMP:10342"/>
        <dbReference type="ChEBI" id="CHEBI:16235"/>
        <dbReference type="ChEBI" id="CHEBI:58703"/>
        <dbReference type="ChEBI" id="CHEBI:74269"/>
        <dbReference type="ChEBI" id="CHEBI:82833"/>
        <dbReference type="EC" id="2.4.2.29"/>
    </reaction>
</comment>
<comment type="cofactor">
    <cofactor evidence="1">
        <name>Zn(2+)</name>
        <dbReference type="ChEBI" id="CHEBI:29105"/>
    </cofactor>
    <text evidence="1">Binds 1 zinc ion per subunit.</text>
</comment>
<comment type="pathway">
    <text evidence="1">tRNA modification; tRNA-queuosine biosynthesis.</text>
</comment>
<comment type="subunit">
    <text evidence="1">Homodimer. Within each dimer, one monomer is responsible for RNA recognition and catalysis, while the other monomer binds to the replacement base PreQ1.</text>
</comment>
<comment type="similarity">
    <text evidence="1">Belongs to the queuine tRNA-ribosyltransferase family.</text>
</comment>
<organism>
    <name type="scientific">Staphylococcus aureus (strain MW2)</name>
    <dbReference type="NCBI Taxonomy" id="196620"/>
    <lineage>
        <taxon>Bacteria</taxon>
        <taxon>Bacillati</taxon>
        <taxon>Bacillota</taxon>
        <taxon>Bacilli</taxon>
        <taxon>Bacillales</taxon>
        <taxon>Staphylococcaceae</taxon>
        <taxon>Staphylococcus</taxon>
    </lineage>
</organism>
<keyword id="KW-0328">Glycosyltransferase</keyword>
<keyword id="KW-0479">Metal-binding</keyword>
<keyword id="KW-0671">Queuosine biosynthesis</keyword>
<keyword id="KW-0808">Transferase</keyword>
<keyword id="KW-0819">tRNA processing</keyword>
<keyword id="KW-0862">Zinc</keyword>
<protein>
    <recommendedName>
        <fullName evidence="1">Queuine tRNA-ribosyltransferase</fullName>
        <ecNumber evidence="1">2.4.2.29</ecNumber>
    </recommendedName>
    <alternativeName>
        <fullName evidence="1">Guanine insertion enzyme</fullName>
    </alternativeName>
    <alternativeName>
        <fullName evidence="1">tRNA-guanine transglycosylase</fullName>
    </alternativeName>
</protein>
<accession>P66906</accession>
<accession>Q99TL4</accession>
<name>TGT_STAAW</name>
<feature type="chain" id="PRO_0000135527" description="Queuine tRNA-ribosyltransferase">
    <location>
        <begin position="1"/>
        <end position="379"/>
    </location>
</feature>
<feature type="region of interest" description="RNA binding" evidence="1">
    <location>
        <begin position="249"/>
        <end position="255"/>
    </location>
</feature>
<feature type="region of interest" description="RNA binding; important for wobble base 34 recognition" evidence="1">
    <location>
        <begin position="273"/>
        <end position="277"/>
    </location>
</feature>
<feature type="active site" description="Proton acceptor" evidence="1">
    <location>
        <position position="94"/>
    </location>
</feature>
<feature type="active site" description="Nucleophile" evidence="1">
    <location>
        <position position="268"/>
    </location>
</feature>
<feature type="binding site" evidence="1">
    <location>
        <begin position="94"/>
        <end position="98"/>
    </location>
    <ligand>
        <name>substrate</name>
    </ligand>
</feature>
<feature type="binding site" evidence="1">
    <location>
        <position position="148"/>
    </location>
    <ligand>
        <name>substrate</name>
    </ligand>
</feature>
<feature type="binding site" evidence="1">
    <location>
        <position position="191"/>
    </location>
    <ligand>
        <name>substrate</name>
    </ligand>
</feature>
<feature type="binding site" evidence="1">
    <location>
        <position position="218"/>
    </location>
    <ligand>
        <name>substrate</name>
    </ligand>
</feature>
<feature type="binding site" evidence="1">
    <location>
        <position position="306"/>
    </location>
    <ligand>
        <name>Zn(2+)</name>
        <dbReference type="ChEBI" id="CHEBI:29105"/>
    </ligand>
</feature>
<feature type="binding site" evidence="1">
    <location>
        <position position="308"/>
    </location>
    <ligand>
        <name>Zn(2+)</name>
        <dbReference type="ChEBI" id="CHEBI:29105"/>
    </ligand>
</feature>
<feature type="binding site" evidence="1">
    <location>
        <position position="311"/>
    </location>
    <ligand>
        <name>Zn(2+)</name>
        <dbReference type="ChEBI" id="CHEBI:29105"/>
    </ligand>
</feature>
<feature type="binding site" evidence="1">
    <location>
        <position position="337"/>
    </location>
    <ligand>
        <name>Zn(2+)</name>
        <dbReference type="ChEBI" id="CHEBI:29105"/>
    </ligand>
</feature>
<proteinExistence type="inferred from homology"/>